<keyword id="KW-0687">Ribonucleoprotein</keyword>
<keyword id="KW-0689">Ribosomal protein</keyword>
<keyword id="KW-0694">RNA-binding</keyword>
<keyword id="KW-0699">rRNA-binding</keyword>
<gene>
    <name evidence="1" type="primary">rpsC</name>
    <name evidence="1" type="synonym">rps3</name>
</gene>
<dbReference type="EMBL" id="AF396937">
    <property type="protein sequence ID" value="AAL57325.1"/>
    <property type="molecule type" value="Genomic_DNA"/>
</dbReference>
<dbReference type="EMBL" id="AF396939">
    <property type="protein sequence ID" value="AAL57327.1"/>
    <property type="molecule type" value="Genomic_DNA"/>
</dbReference>
<dbReference type="EMBL" id="AF396940">
    <property type="protein sequence ID" value="AAL57328.1"/>
    <property type="molecule type" value="Genomic_DNA"/>
</dbReference>
<dbReference type="EMBL" id="AF396942">
    <property type="protein sequence ID" value="AAL57330.1"/>
    <property type="molecule type" value="Genomic_DNA"/>
</dbReference>
<dbReference type="EMBL" id="AF396943">
    <property type="protein sequence ID" value="AAL57331.1"/>
    <property type="molecule type" value="Genomic_DNA"/>
</dbReference>
<dbReference type="EMBL" id="AF396945">
    <property type="protein sequence ID" value="AAL57333.1"/>
    <property type="molecule type" value="Genomic_DNA"/>
</dbReference>
<dbReference type="EMBL" id="AF396946">
    <property type="protein sequence ID" value="AAL57334.1"/>
    <property type="molecule type" value="Genomic_DNA"/>
</dbReference>
<dbReference type="EMBL" id="AF396947">
    <property type="protein sequence ID" value="AAL57335.1"/>
    <property type="molecule type" value="Genomic_DNA"/>
</dbReference>
<dbReference type="EMBL" id="AF396948">
    <property type="protein sequence ID" value="AAL57336.1"/>
    <property type="molecule type" value="Genomic_DNA"/>
</dbReference>
<dbReference type="EMBL" id="AF396950">
    <property type="protein sequence ID" value="AAL57338.1"/>
    <property type="molecule type" value="Genomic_DNA"/>
</dbReference>
<dbReference type="EMBL" id="AF396951">
    <property type="protein sequence ID" value="AAL57339.1"/>
    <property type="molecule type" value="Genomic_DNA"/>
</dbReference>
<dbReference type="SMR" id="Q8VL42"/>
<dbReference type="GO" id="GO:0022627">
    <property type="term" value="C:cytosolic small ribosomal subunit"/>
    <property type="evidence" value="ECO:0007669"/>
    <property type="project" value="TreeGrafter"/>
</dbReference>
<dbReference type="GO" id="GO:0003729">
    <property type="term" value="F:mRNA binding"/>
    <property type="evidence" value="ECO:0007669"/>
    <property type="project" value="UniProtKB-UniRule"/>
</dbReference>
<dbReference type="GO" id="GO:0019843">
    <property type="term" value="F:rRNA binding"/>
    <property type="evidence" value="ECO:0007669"/>
    <property type="project" value="UniProtKB-UniRule"/>
</dbReference>
<dbReference type="GO" id="GO:0003735">
    <property type="term" value="F:structural constituent of ribosome"/>
    <property type="evidence" value="ECO:0007669"/>
    <property type="project" value="InterPro"/>
</dbReference>
<dbReference type="GO" id="GO:0006412">
    <property type="term" value="P:translation"/>
    <property type="evidence" value="ECO:0007669"/>
    <property type="project" value="UniProtKB-UniRule"/>
</dbReference>
<dbReference type="CDD" id="cd02412">
    <property type="entry name" value="KH-II_30S_S3"/>
    <property type="match status" value="1"/>
</dbReference>
<dbReference type="Gene3D" id="3.30.300.20">
    <property type="match status" value="1"/>
</dbReference>
<dbReference type="Gene3D" id="3.30.1140.32">
    <property type="entry name" value="Ribosomal protein S3, C-terminal domain"/>
    <property type="match status" value="1"/>
</dbReference>
<dbReference type="HAMAP" id="MF_01309_B">
    <property type="entry name" value="Ribosomal_uS3_B"/>
    <property type="match status" value="1"/>
</dbReference>
<dbReference type="InterPro" id="IPR015946">
    <property type="entry name" value="KH_dom-like_a/b"/>
</dbReference>
<dbReference type="InterPro" id="IPR004044">
    <property type="entry name" value="KH_dom_type_2"/>
</dbReference>
<dbReference type="InterPro" id="IPR009019">
    <property type="entry name" value="KH_sf_prok-type"/>
</dbReference>
<dbReference type="InterPro" id="IPR036419">
    <property type="entry name" value="Ribosomal_S3_C_sf"/>
</dbReference>
<dbReference type="InterPro" id="IPR005704">
    <property type="entry name" value="Ribosomal_uS3_bac-typ"/>
</dbReference>
<dbReference type="InterPro" id="IPR001351">
    <property type="entry name" value="Ribosomal_uS3_C"/>
</dbReference>
<dbReference type="InterPro" id="IPR018280">
    <property type="entry name" value="Ribosomal_uS3_CS"/>
</dbReference>
<dbReference type="NCBIfam" id="TIGR01009">
    <property type="entry name" value="rpsC_bact"/>
    <property type="match status" value="1"/>
</dbReference>
<dbReference type="PANTHER" id="PTHR11760">
    <property type="entry name" value="30S/40S RIBOSOMAL PROTEIN S3"/>
    <property type="match status" value="1"/>
</dbReference>
<dbReference type="PANTHER" id="PTHR11760:SF19">
    <property type="entry name" value="SMALL RIBOSOMAL SUBUNIT PROTEIN US3C"/>
    <property type="match status" value="1"/>
</dbReference>
<dbReference type="Pfam" id="PF00189">
    <property type="entry name" value="Ribosomal_S3_C"/>
    <property type="match status" value="1"/>
</dbReference>
<dbReference type="SUPFAM" id="SSF54814">
    <property type="entry name" value="Prokaryotic type KH domain (KH-domain type II)"/>
    <property type="match status" value="1"/>
</dbReference>
<dbReference type="SUPFAM" id="SSF54821">
    <property type="entry name" value="Ribosomal protein S3 C-terminal domain"/>
    <property type="match status" value="1"/>
</dbReference>
<dbReference type="PROSITE" id="PS50823">
    <property type="entry name" value="KH_TYPE_2"/>
    <property type="match status" value="1"/>
</dbReference>
<dbReference type="PROSITE" id="PS00548">
    <property type="entry name" value="RIBOSOMAL_S3"/>
    <property type="match status" value="1"/>
</dbReference>
<feature type="chain" id="PRO_0000130120" description="Small ribosomal subunit protein uS3">
    <location>
        <begin position="1"/>
        <end position="250"/>
    </location>
</feature>
<feature type="domain" description="KH type-2" evidence="1">
    <location>
        <begin position="39"/>
        <end position="111"/>
    </location>
</feature>
<feature type="sequence variant" description="In strain: AL202, AT4 and PV259.">
    <original>H</original>
    <variation>Y</variation>
    <location>
        <position position="46"/>
    </location>
</feature>
<feature type="sequence variant" description="In strain: AL202, AT4, FD70 and PV259.">
    <original>V</original>
    <variation>I</variation>
    <location>
        <position position="103"/>
    </location>
</feature>
<feature type="sequence variant" description="In strain: TV46 and TV51.">
    <original>V</original>
    <variation>I</variation>
    <location>
        <position position="118"/>
    </location>
</feature>
<name>RS3_PHYVT</name>
<sequence>MGQKSNPNGLRLGIIRTWESKWYDVDKKVPFLVGEDFKIRTLIKNHYPKSTISQIEIKRLKKSNDEFIEIDLYTSKIGIIQGPENKNKNSLINKIEKLINKKVQINIFEVKAINKIAVLVAQNIAMQLQQRAFYKAVLKSAIQKALKSGIKGIKIIITGRLGGAEKARRDSISMGVVPLNTLRADIDYAFEEAHTTYGVLGVKVIINHGEVLPNKTIADTRQIFSSQYENKKNNNKRHFVDKKNFKKSTS</sequence>
<comment type="function">
    <text evidence="1">Binds the lower part of the 30S subunit head. Binds mRNA in the 70S ribosome, positioning it for translation.</text>
</comment>
<comment type="subunit">
    <text evidence="1">Part of the 30S ribosomal subunit. Forms a tight complex with proteins S10 and S14.</text>
</comment>
<comment type="similarity">
    <text evidence="1">Belongs to the universal ribosomal protein uS3 family.</text>
</comment>
<evidence type="ECO:0000255" key="1">
    <source>
        <dbReference type="HAMAP-Rule" id="MF_01309"/>
    </source>
</evidence>
<evidence type="ECO:0000305" key="2"/>
<accession>Q8VL42</accession>
<accession>Q8VL25</accession>
<accession>Q8VL43</accession>
<accession>Q8VS62</accession>
<protein>
    <recommendedName>
        <fullName evidence="1">Small ribosomal subunit protein uS3</fullName>
    </recommendedName>
    <alternativeName>
        <fullName evidence="2">30S ribosomal protein S3</fullName>
    </alternativeName>
</protein>
<reference key="1">
    <citation type="journal article" date="2002" name="Mol. Cell. Probes">
        <title>Genetic variability among flavescence doree phytoplasmas from different origins in Italy and France.</title>
        <authorList>
            <person name="Martini M."/>
            <person name="Botti S."/>
            <person name="Marcone C."/>
            <person name="Marzachi C."/>
            <person name="Casati P."/>
            <person name="Bianco P.A."/>
            <person name="Benedetti R."/>
            <person name="Bertaccini A."/>
        </authorList>
    </citation>
    <scope>NUCLEOTIDE SEQUENCE [GENOMIC DNA]</scope>
    <source>
        <strain>AL202</strain>
        <strain>AT4</strain>
        <strain>FD70</strain>
        <strain>FD88</strain>
        <strain>PC2</strain>
        <strain>PN6</strain>
        <strain>PV259</strain>
        <strain>TV46</strain>
        <strain>TV51</strain>
        <strain>VR2</strain>
    </source>
</reference>
<organism>
    <name type="scientific">Phytoplasma vitis</name>
    <name type="common">Flavescence doree phytoplasma</name>
    <dbReference type="NCBI Taxonomy" id="131152"/>
    <lineage>
        <taxon>Bacteria</taxon>
        <taxon>Bacillati</taxon>
        <taxon>Mycoplasmatota</taxon>
        <taxon>Mollicutes</taxon>
        <taxon>Acholeplasmatales</taxon>
        <taxon>Acholeplasmataceae</taxon>
        <taxon>Candidatus Phytoplasma</taxon>
        <taxon>16SrV (Elm yellows group)</taxon>
    </lineage>
</organism>
<proteinExistence type="inferred from homology"/>